<name>PALF_PYRO7</name>
<protein>
    <recommendedName>
        <fullName>pH-response regulator protein palF/RIM8</fullName>
    </recommendedName>
</protein>
<accession>Q52FM1</accession>
<accession>A4RK46</accession>
<accession>G4MTZ9</accession>
<feature type="chain" id="PRO_0000058191" description="pH-response regulator protein palF/RIM8">
    <location>
        <begin position="1"/>
        <end position="824"/>
    </location>
</feature>
<feature type="region of interest" description="Disordered" evidence="2">
    <location>
        <begin position="197"/>
        <end position="281"/>
    </location>
</feature>
<feature type="region of interest" description="Disordered" evidence="2">
    <location>
        <begin position="547"/>
        <end position="824"/>
    </location>
</feature>
<feature type="compositionally biased region" description="Basic and acidic residues" evidence="2">
    <location>
        <begin position="235"/>
        <end position="248"/>
    </location>
</feature>
<feature type="compositionally biased region" description="Polar residues" evidence="2">
    <location>
        <begin position="564"/>
        <end position="578"/>
    </location>
</feature>
<feature type="compositionally biased region" description="Basic and acidic residues" evidence="2">
    <location>
        <begin position="649"/>
        <end position="660"/>
    </location>
</feature>
<feature type="compositionally biased region" description="Basic and acidic residues" evidence="2">
    <location>
        <begin position="726"/>
        <end position="738"/>
    </location>
</feature>
<feature type="compositionally biased region" description="Polar residues" evidence="2">
    <location>
        <begin position="758"/>
        <end position="768"/>
    </location>
</feature>
<feature type="compositionally biased region" description="Polar residues" evidence="2">
    <location>
        <begin position="791"/>
        <end position="800"/>
    </location>
</feature>
<evidence type="ECO:0000250" key="1"/>
<evidence type="ECO:0000256" key="2">
    <source>
        <dbReference type="SAM" id="MobiDB-lite"/>
    </source>
</evidence>
<evidence type="ECO:0000305" key="3"/>
<sequence length="824" mass="88159">MGGSSASRNQSSLLEDTHTSRSLISRLFSRSKTRHITDFHIRPVDPHRKYAKGDHVTGAVVLTVLRPIRITHLTVALHGFVKVFKSPNAAHEATINTAQIASGVTNRTRYLGNGLASLFQDEQVLSADGKLEAGRYEFNFDLVFPSKVNLPTSIDFERGTISYMISATLTRPTSITPTTVCDRKIYLVEKVDIGSIPAPRPRTISLEPISRRTRRRRTDRPSTLGGADRGSSLGDSHDVTSSDLDSSRAPESVAAESNIANDAAFEGQQAPQSPTRTEMPDVMSEVSTESAITSSSAGASVGYKVSEATGSSSGSQFGARTPTVEEKTITASVEMLKGGCLPGDFVPVKISVHHIKRIKSVHGVIVTLYRQGRIDSAPPISSFQGLSKEDVRRLEKEEYFPRSKTGLSGLSLSSAGSCSVFRKDLSQAFGPLIIDPITLDASVTISVRVPEDVFPTIKGVPGELISFKYQMEVIVDLGGKLASQISSVQSKAGGISAGGAMPSARNPYESGGSSIMGSWGNSIIDTDQLRRHKGVISVVFEVPVGSVDSSRQRTRGGSLRPNPQARQPSQATESSQIPTVGYGPEDKQRAQSEPAGQEDYVHSHGSQGNGPMGPSTEYVPSPYYTPHDPRQQHAPIYIPPPDVPNDMGLSEKERARRAEQRLLPSQPPAAPFASTLSETTLEDIYNVEDDAAAGPSSAPIVGNSNGVATAPTLDEVESGEAAVGNSEDKLERERHRLLQEASAPPDFPEDYDTGDPGPSNQGPVTSATAPALSFQPSAPILSEDDEDPGSSYFNQHTSTGDYMGAGALGRPITAPHEPLPRYQR</sequence>
<organism>
    <name type="scientific">Pyricularia oryzae (strain 70-15 / ATCC MYA-4617 / FGSC 8958)</name>
    <name type="common">Rice blast fungus</name>
    <name type="synonym">Magnaporthe oryzae</name>
    <dbReference type="NCBI Taxonomy" id="242507"/>
    <lineage>
        <taxon>Eukaryota</taxon>
        <taxon>Fungi</taxon>
        <taxon>Dikarya</taxon>
        <taxon>Ascomycota</taxon>
        <taxon>Pezizomycotina</taxon>
        <taxon>Sordariomycetes</taxon>
        <taxon>Sordariomycetidae</taxon>
        <taxon>Magnaporthales</taxon>
        <taxon>Pyriculariaceae</taxon>
        <taxon>Pyricularia</taxon>
    </lineage>
</organism>
<comment type="function">
    <text evidence="1">Required for the proteolytic cleavage of the transcription factor RIM101 in response to alkaline ambient pH.</text>
</comment>
<comment type="similarity">
    <text evidence="3">Belongs to the arrestin family. PalF/RIM8 subfamily.</text>
</comment>
<dbReference type="EMBL" id="CM001232">
    <property type="protein sequence ID" value="EHA54793.1"/>
    <property type="molecule type" value="Genomic_DNA"/>
</dbReference>
<dbReference type="RefSeq" id="XP_003714600.1">
    <property type="nucleotide sequence ID" value="XM_003714552.1"/>
</dbReference>
<dbReference type="FunCoup" id="Q52FM1">
    <property type="interactions" value="19"/>
</dbReference>
<dbReference type="STRING" id="242507.Q52FM1"/>
<dbReference type="EnsemblFungi" id="MGG_01615T0">
    <property type="protein sequence ID" value="MGG_01615T0"/>
    <property type="gene ID" value="MGG_01615"/>
</dbReference>
<dbReference type="GeneID" id="2679316"/>
<dbReference type="KEGG" id="mgr:MGG_01615"/>
<dbReference type="VEuPathDB" id="FungiDB:MGG_01615"/>
<dbReference type="eggNOG" id="ENOG502QTQN">
    <property type="taxonomic scope" value="Eukaryota"/>
</dbReference>
<dbReference type="HOGENOM" id="CLU_006001_0_0_1"/>
<dbReference type="InParanoid" id="Q52FM1"/>
<dbReference type="OMA" id="CLHGYAK"/>
<dbReference type="OrthoDB" id="7785529at2759"/>
<dbReference type="Proteomes" id="UP000009058">
    <property type="component" value="Chromosome 2"/>
</dbReference>
<dbReference type="GO" id="GO:0005829">
    <property type="term" value="C:cytosol"/>
    <property type="evidence" value="ECO:0007669"/>
    <property type="project" value="TreeGrafter"/>
</dbReference>
<dbReference type="GO" id="GO:0005886">
    <property type="term" value="C:plasma membrane"/>
    <property type="evidence" value="ECO:0007669"/>
    <property type="project" value="TreeGrafter"/>
</dbReference>
<dbReference type="GO" id="GO:0030674">
    <property type="term" value="F:protein-macromolecule adaptor activity"/>
    <property type="evidence" value="ECO:0007669"/>
    <property type="project" value="TreeGrafter"/>
</dbReference>
<dbReference type="GO" id="GO:0031625">
    <property type="term" value="F:ubiquitin protein ligase binding"/>
    <property type="evidence" value="ECO:0007669"/>
    <property type="project" value="TreeGrafter"/>
</dbReference>
<dbReference type="GO" id="GO:0070086">
    <property type="term" value="P:ubiquitin-dependent endocytosis"/>
    <property type="evidence" value="ECO:0007669"/>
    <property type="project" value="TreeGrafter"/>
</dbReference>
<dbReference type="Gene3D" id="2.60.40.640">
    <property type="match status" value="1"/>
</dbReference>
<dbReference type="InterPro" id="IPR014752">
    <property type="entry name" value="Arrestin-like_C"/>
</dbReference>
<dbReference type="InterPro" id="IPR011021">
    <property type="entry name" value="Arrestin-like_N"/>
</dbReference>
<dbReference type="InterPro" id="IPR011022">
    <property type="entry name" value="Arrestin_C-like"/>
</dbReference>
<dbReference type="InterPro" id="IPR050357">
    <property type="entry name" value="Arrestin_domain-protein"/>
</dbReference>
<dbReference type="InterPro" id="IPR014756">
    <property type="entry name" value="Ig_E-set"/>
</dbReference>
<dbReference type="PANTHER" id="PTHR11188">
    <property type="entry name" value="ARRESTIN DOMAIN CONTAINING PROTEIN"/>
    <property type="match status" value="1"/>
</dbReference>
<dbReference type="PANTHER" id="PTHR11188:SF161">
    <property type="entry name" value="PH-RESPONSE REGULATOR PROTEIN PALF_RIM8"/>
    <property type="match status" value="1"/>
</dbReference>
<dbReference type="Pfam" id="PF02752">
    <property type="entry name" value="Arrestin_C"/>
    <property type="match status" value="1"/>
</dbReference>
<dbReference type="Pfam" id="PF00339">
    <property type="entry name" value="Arrestin_N"/>
    <property type="match status" value="1"/>
</dbReference>
<dbReference type="SMART" id="SM01017">
    <property type="entry name" value="Arrestin_C"/>
    <property type="match status" value="1"/>
</dbReference>
<dbReference type="SUPFAM" id="SSF81296">
    <property type="entry name" value="E set domains"/>
    <property type="match status" value="1"/>
</dbReference>
<reference key="1">
    <citation type="journal article" date="2005" name="Nature">
        <title>The genome sequence of the rice blast fungus Magnaporthe grisea.</title>
        <authorList>
            <person name="Dean R.A."/>
            <person name="Talbot N.J."/>
            <person name="Ebbole D.J."/>
            <person name="Farman M.L."/>
            <person name="Mitchell T.K."/>
            <person name="Orbach M.J."/>
            <person name="Thon M.R."/>
            <person name="Kulkarni R."/>
            <person name="Xu J.-R."/>
            <person name="Pan H."/>
            <person name="Read N.D."/>
            <person name="Lee Y.-H."/>
            <person name="Carbone I."/>
            <person name="Brown D."/>
            <person name="Oh Y.Y."/>
            <person name="Donofrio N."/>
            <person name="Jeong J.S."/>
            <person name="Soanes D.M."/>
            <person name="Djonovic S."/>
            <person name="Kolomiets E."/>
            <person name="Rehmeyer C."/>
            <person name="Li W."/>
            <person name="Harding M."/>
            <person name="Kim S."/>
            <person name="Lebrun M.-H."/>
            <person name="Bohnert H."/>
            <person name="Coughlan S."/>
            <person name="Butler J."/>
            <person name="Calvo S.E."/>
            <person name="Ma L.-J."/>
            <person name="Nicol R."/>
            <person name="Purcell S."/>
            <person name="Nusbaum C."/>
            <person name="Galagan J.E."/>
            <person name="Birren B.W."/>
        </authorList>
    </citation>
    <scope>NUCLEOTIDE SEQUENCE [LARGE SCALE GENOMIC DNA]</scope>
    <source>
        <strain>70-15 / ATCC MYA-4617 / FGSC 8958</strain>
    </source>
</reference>
<proteinExistence type="inferred from homology"/>
<keyword id="KW-1185">Reference proteome</keyword>
<gene>
    <name type="primary">RIM8</name>
    <name type="ORF">MGG_01615</name>
</gene>